<protein>
    <recommendedName>
        <fullName evidence="1">Octanoyltransferase</fullName>
        <ecNumber evidence="1">2.3.1.181</ecNumber>
    </recommendedName>
    <alternativeName>
        <fullName evidence="1">Lipoate-protein ligase B</fullName>
    </alternativeName>
    <alternativeName>
        <fullName evidence="1">Lipoyl/octanoyl transferase</fullName>
    </alternativeName>
    <alternativeName>
        <fullName evidence="1">Octanoyl-[acyl-carrier-protein]-protein N-octanoyltransferase</fullName>
    </alternativeName>
</protein>
<feature type="chain" id="PRO_1000116286" description="Octanoyltransferase">
    <location>
        <begin position="1"/>
        <end position="220"/>
    </location>
</feature>
<feature type="domain" description="BPL/LPL catalytic" evidence="2">
    <location>
        <begin position="34"/>
        <end position="209"/>
    </location>
</feature>
<feature type="active site" description="Acyl-thioester intermediate" evidence="1">
    <location>
        <position position="171"/>
    </location>
</feature>
<feature type="binding site" evidence="1">
    <location>
        <begin position="73"/>
        <end position="80"/>
    </location>
    <ligand>
        <name>substrate</name>
    </ligand>
</feature>
<feature type="binding site" evidence="1">
    <location>
        <begin position="140"/>
        <end position="142"/>
    </location>
    <ligand>
        <name>substrate</name>
    </ligand>
</feature>
<feature type="binding site" evidence="1">
    <location>
        <begin position="153"/>
        <end position="155"/>
    </location>
    <ligand>
        <name>substrate</name>
    </ligand>
</feature>
<feature type="site" description="Lowers pKa of active site Cys" evidence="1">
    <location>
        <position position="137"/>
    </location>
</feature>
<proteinExistence type="inferred from homology"/>
<comment type="function">
    <text evidence="1">Catalyzes the transfer of endogenously produced octanoic acid from octanoyl-acyl-carrier-protein onto the lipoyl domains of lipoate-dependent enzymes. Lipoyl-ACP can also act as a substrate although octanoyl-ACP is likely to be the physiological substrate.</text>
</comment>
<comment type="catalytic activity">
    <reaction evidence="1">
        <text>octanoyl-[ACP] + L-lysyl-[protein] = N(6)-octanoyl-L-lysyl-[protein] + holo-[ACP] + H(+)</text>
        <dbReference type="Rhea" id="RHEA:17665"/>
        <dbReference type="Rhea" id="RHEA-COMP:9636"/>
        <dbReference type="Rhea" id="RHEA-COMP:9685"/>
        <dbReference type="Rhea" id="RHEA-COMP:9752"/>
        <dbReference type="Rhea" id="RHEA-COMP:9928"/>
        <dbReference type="ChEBI" id="CHEBI:15378"/>
        <dbReference type="ChEBI" id="CHEBI:29969"/>
        <dbReference type="ChEBI" id="CHEBI:64479"/>
        <dbReference type="ChEBI" id="CHEBI:78463"/>
        <dbReference type="ChEBI" id="CHEBI:78809"/>
        <dbReference type="EC" id="2.3.1.181"/>
    </reaction>
</comment>
<comment type="pathway">
    <text evidence="1">Protein modification; protein lipoylation via endogenous pathway; protein N(6)-(lipoyl)lysine from octanoyl-[acyl-carrier-protein]: step 1/2.</text>
</comment>
<comment type="subcellular location">
    <subcellularLocation>
        <location evidence="1">Cytoplasm</location>
    </subcellularLocation>
</comment>
<comment type="miscellaneous">
    <text evidence="1">In the reaction, the free carboxyl group of octanoic acid is attached via an amide linkage to the epsilon-amino group of a specific lysine residue of lipoyl domains of lipoate-dependent enzymes.</text>
</comment>
<comment type="similarity">
    <text evidence="1">Belongs to the LipB family.</text>
</comment>
<reference key="1">
    <citation type="journal article" date="2008" name="PLoS ONE">
        <title>Environmental adaptation: genomic analysis of the piezotolerant and psychrotolerant deep-sea iron reducing bacterium Shewanella piezotolerans WP3.</title>
        <authorList>
            <person name="Wang F."/>
            <person name="Wang J."/>
            <person name="Jian H."/>
            <person name="Zhang B."/>
            <person name="Li S."/>
            <person name="Wang F."/>
            <person name="Zeng X."/>
            <person name="Gao L."/>
            <person name="Bartlett D.H."/>
            <person name="Yu J."/>
            <person name="Hu S."/>
            <person name="Xiao X."/>
        </authorList>
    </citation>
    <scope>NUCLEOTIDE SEQUENCE [LARGE SCALE GENOMIC DNA]</scope>
    <source>
        <strain>WP3 / JCM 13877</strain>
    </source>
</reference>
<sequence length="220" mass="24668">MPLLESTLHIRHLGRQDYESVWHAMQHYTDNRDENSQDEIWVVEHTPVFTQGQAGKSEHILNPGDIPVIQVDRGGQVTYHGPGQLVIYPLLDIKRLKVGVRQLVTHIEQSIVNMLKRYDVEAYAKADAPGVYVEERKVASLGLRIRKGCSFHGLALNVDMDMSPFQRINPCGYAGMEMIQCKQLGGPQTVEEAGKQLVETLSQELGLANLVHHQGLPESL</sequence>
<name>LIPB_SHEPW</name>
<keyword id="KW-0012">Acyltransferase</keyword>
<keyword id="KW-0963">Cytoplasm</keyword>
<keyword id="KW-0808">Transferase</keyword>
<dbReference type="EC" id="2.3.1.181" evidence="1"/>
<dbReference type="EMBL" id="CP000472">
    <property type="protein sequence ID" value="ACJ30602.1"/>
    <property type="molecule type" value="Genomic_DNA"/>
</dbReference>
<dbReference type="SMR" id="B8CSH6"/>
<dbReference type="STRING" id="225849.swp_3928"/>
<dbReference type="KEGG" id="swp:swp_3928"/>
<dbReference type="eggNOG" id="COG0321">
    <property type="taxonomic scope" value="Bacteria"/>
</dbReference>
<dbReference type="HOGENOM" id="CLU_035168_3_1_6"/>
<dbReference type="UniPathway" id="UPA00538">
    <property type="reaction ID" value="UER00592"/>
</dbReference>
<dbReference type="Proteomes" id="UP000000753">
    <property type="component" value="Chromosome"/>
</dbReference>
<dbReference type="GO" id="GO:0005737">
    <property type="term" value="C:cytoplasm"/>
    <property type="evidence" value="ECO:0007669"/>
    <property type="project" value="UniProtKB-SubCell"/>
</dbReference>
<dbReference type="GO" id="GO:0033819">
    <property type="term" value="F:lipoyl(octanoyl) transferase activity"/>
    <property type="evidence" value="ECO:0007669"/>
    <property type="project" value="UniProtKB-EC"/>
</dbReference>
<dbReference type="GO" id="GO:0036211">
    <property type="term" value="P:protein modification process"/>
    <property type="evidence" value="ECO:0007669"/>
    <property type="project" value="InterPro"/>
</dbReference>
<dbReference type="CDD" id="cd16444">
    <property type="entry name" value="LipB"/>
    <property type="match status" value="1"/>
</dbReference>
<dbReference type="FunFam" id="3.30.930.10:FF:000020">
    <property type="entry name" value="Octanoyltransferase"/>
    <property type="match status" value="1"/>
</dbReference>
<dbReference type="Gene3D" id="3.30.930.10">
    <property type="entry name" value="Bira Bifunctional Protein, Domain 2"/>
    <property type="match status" value="1"/>
</dbReference>
<dbReference type="HAMAP" id="MF_00013">
    <property type="entry name" value="LipB"/>
    <property type="match status" value="1"/>
</dbReference>
<dbReference type="InterPro" id="IPR045864">
    <property type="entry name" value="aa-tRNA-synth_II/BPL/LPL"/>
</dbReference>
<dbReference type="InterPro" id="IPR004143">
    <property type="entry name" value="BPL_LPL_catalytic"/>
</dbReference>
<dbReference type="InterPro" id="IPR000544">
    <property type="entry name" value="Octanoyltransferase"/>
</dbReference>
<dbReference type="InterPro" id="IPR020605">
    <property type="entry name" value="Octanoyltransferase_CS"/>
</dbReference>
<dbReference type="NCBIfam" id="TIGR00214">
    <property type="entry name" value="lipB"/>
    <property type="match status" value="1"/>
</dbReference>
<dbReference type="NCBIfam" id="NF010922">
    <property type="entry name" value="PRK14342.1"/>
    <property type="match status" value="1"/>
</dbReference>
<dbReference type="PANTHER" id="PTHR10993:SF7">
    <property type="entry name" value="LIPOYLTRANSFERASE 2, MITOCHONDRIAL-RELATED"/>
    <property type="match status" value="1"/>
</dbReference>
<dbReference type="PANTHER" id="PTHR10993">
    <property type="entry name" value="OCTANOYLTRANSFERASE"/>
    <property type="match status" value="1"/>
</dbReference>
<dbReference type="Pfam" id="PF21948">
    <property type="entry name" value="LplA-B_cat"/>
    <property type="match status" value="1"/>
</dbReference>
<dbReference type="PIRSF" id="PIRSF016262">
    <property type="entry name" value="LPLase"/>
    <property type="match status" value="1"/>
</dbReference>
<dbReference type="SUPFAM" id="SSF55681">
    <property type="entry name" value="Class II aaRS and biotin synthetases"/>
    <property type="match status" value="1"/>
</dbReference>
<dbReference type="PROSITE" id="PS51733">
    <property type="entry name" value="BPL_LPL_CATALYTIC"/>
    <property type="match status" value="1"/>
</dbReference>
<dbReference type="PROSITE" id="PS01313">
    <property type="entry name" value="LIPB"/>
    <property type="match status" value="1"/>
</dbReference>
<evidence type="ECO:0000255" key="1">
    <source>
        <dbReference type="HAMAP-Rule" id="MF_00013"/>
    </source>
</evidence>
<evidence type="ECO:0000255" key="2">
    <source>
        <dbReference type="PROSITE-ProRule" id="PRU01067"/>
    </source>
</evidence>
<gene>
    <name evidence="1" type="primary">lipB</name>
    <name type="ordered locus">swp_3928</name>
</gene>
<accession>B8CSH6</accession>
<organism>
    <name type="scientific">Shewanella piezotolerans (strain WP3 / JCM 13877)</name>
    <dbReference type="NCBI Taxonomy" id="225849"/>
    <lineage>
        <taxon>Bacteria</taxon>
        <taxon>Pseudomonadati</taxon>
        <taxon>Pseudomonadota</taxon>
        <taxon>Gammaproteobacteria</taxon>
        <taxon>Alteromonadales</taxon>
        <taxon>Shewanellaceae</taxon>
        <taxon>Shewanella</taxon>
    </lineage>
</organism>